<protein>
    <recommendedName>
        <fullName evidence="1">Glutamate rich 3</fullName>
    </recommendedName>
</protein>
<sequence>MSHSHPAGLLATYNSLTDKHLAGYFNNTRIRRHLLRSGLITRSGRILSEKEYKVNNMKQDHQKYIRECLARAIFHKVLDMERYHQLEIKRKLDTLARKERIQRLKGEHTRRFIEDNMPVLTPHPPAGPKTNRGHSVLAEEGRSSPLTLTAPRPYTAPGNMQPPVRLQPLLSSRQTRNGSKITSGSKPKGSLLESEALFPLGGKKAMMKFRNYMDHSQKEDLYQLPHINSYHTPVPPTPQPQAGKNFRDKRLESWRRKRLRPITAPNGLEPLFAKDPGRIYKTAPHSNAVITMVYFGKNVHLSYDDIDFRDEIKIYQQHCGGENLCVYKGKLLEKDTFQFISKRHHGFPFSLTFFLNGIQVNRISSCCEFKHRRSTRLGGKRGYFGFVCVEKASPCYRCIIAMGLDRKPSSTKPKKEKITEKKEEPPNKSQGKLRKDRMNAPSKRNEMERKESCVSAAFSAEEIKLGVKEVRTAIEEMEWKGKSGRDVWEEDQDNAVKYDYEEDFEVDDEKQDEKVDEDEDQADDQMSGGSKTPTESEKDNRNPEKKIETSSEKAHDSENEDTGCSDSEEDDRQDVKTMSSISSRSHPYSSESEDDSTEVGGEADSVSEEGSSRSSSSQDLRENDDPGKPHFPIEKYLETEIEEQEITEGHNGPWLTELSGMHVTEGKPTMGIQALSESEHKEPRRVASSEVRAKSQLQKEAGLPGVEEEVGQITGGAQEPGHCCSNTAPGLSPTDDGVTPMRKPEVNLGRGTEERAAISANEQPEQDAQEMHTLKEEAMKKDESSQPEDTDAHAGVREESGMQKDGTCHPQDAGIDVELRERVDMQEDGTCHPQGADMDVGLKERVGVQEDGTHYPQDADMDVGLRERVGMQEDGTHHSQDADMDVELKERVGMQEDGTCHPQDANMDVELKERVGMQEDGTCHPQDADMDVELEERTGMQEDGTHHPQGADVDLGLRERAGMQEDGTCYPQNANMDVGLREKAGISEVLLGERSPTGVLLASAEQSTEKGECYLNIASEAEAGTEGSSRHGEEQLIPTGKVAAEGSVFLSVEQARDRQKDEDLDRQALLQTQMEKERAVSEAGQELKAEFTDSGGLNSETLEEAAVLKEVGTSEVKEAEREVGSPKTDGDQGEEEALTELEVVGPVEDTGPERKAGSEETVLGGERAATERKDFLEEAPISASTGEVQASPREVFRGNHELCKEDTAREGVIADTESTAEQDLRAVFPGELAAAGGIEKVERLTPPLRETGSEREEETGPEVLKTEDLLGEQKVKGEEEGTAKEVGSEEEDRASRPEMEAHAKDVEPTGATELGEATKLLEDPPKERAITLSEATPQFGKSPKESEATATEHKGGEELPGQESKALWPQGRGLSHDGEGLLGAPGPEADKAQGPEGFFTARCEEWAAKELDSSAGSERLEEDQPLQAQREDIQRMTQGNLSGERLTRAVVVCGEAKAENPQGEGSEDKECPPGTVTGSLTGQNWNMGGNIVEAEEDPHGGGIEEPTAEQKEEESAESKSADGIPEASSAANAQKETWDGAGEALGEAAAEERTGTEDMAPRTEKVAVVEEVTSAGAMVETEQEQAPEAQDREGGETKASRHTGTAGEDTGSTGKDEEHQSGAAEEFRESVSQRETA</sequence>
<dbReference type="EMBL" id="AK076632">
    <property type="protein sequence ID" value="BAC36423.1"/>
    <property type="molecule type" value="mRNA"/>
</dbReference>
<dbReference type="EMBL" id="AC107667">
    <property type="status" value="NOT_ANNOTATED_CDS"/>
    <property type="molecule type" value="Genomic_DNA"/>
</dbReference>
<dbReference type="EMBL" id="AC125097">
    <property type="status" value="NOT_ANNOTATED_CDS"/>
    <property type="molecule type" value="Genomic_DNA"/>
</dbReference>
<dbReference type="CCDS" id="CCDS51099.1">
    <molecule id="F6QRE9-2"/>
</dbReference>
<dbReference type="RefSeq" id="NP_780385.1">
    <molecule id="F6QRE9-2"/>
    <property type="nucleotide sequence ID" value="NM_175176.3"/>
</dbReference>
<dbReference type="FunCoup" id="F6QRE9">
    <property type="interactions" value="1"/>
</dbReference>
<dbReference type="STRING" id="10090.ENSMUSP00000062837"/>
<dbReference type="GlyGen" id="F6QRE9">
    <property type="glycosylation" value="2 sites"/>
</dbReference>
<dbReference type="iPTMnet" id="F6QRE9"/>
<dbReference type="PhosphoSitePlus" id="F6QRE9"/>
<dbReference type="PaxDb" id="10090-ENSMUSP00000096097"/>
<dbReference type="ProteomicsDB" id="332534"/>
<dbReference type="ProteomicsDB" id="368044"/>
<dbReference type="Antibodypedia" id="49494">
    <property type="antibodies" value="42 antibodies from 7 providers"/>
</dbReference>
<dbReference type="Ensembl" id="ENSMUST00000051862.8">
    <molecule id="F6QRE9-2"/>
    <property type="protein sequence ID" value="ENSMUSP00000062837.7"/>
    <property type="gene ID" value="ENSMUSG00000078161.9"/>
</dbReference>
<dbReference type="Ensembl" id="ENSMUST00000098496.9">
    <molecule id="F6QRE9-1"/>
    <property type="protein sequence ID" value="ENSMUSP00000096097.5"/>
    <property type="gene ID" value="ENSMUSG00000078161.9"/>
</dbReference>
<dbReference type="GeneID" id="209601"/>
<dbReference type="KEGG" id="mmu:209601"/>
<dbReference type="AGR" id="MGI:1919095"/>
<dbReference type="CTD" id="127254"/>
<dbReference type="MGI" id="MGI:1919095">
    <property type="gene designation" value="Erich3"/>
</dbReference>
<dbReference type="VEuPathDB" id="HostDB:ENSMUSG00000078161"/>
<dbReference type="eggNOG" id="ENOG502QVG1">
    <property type="taxonomic scope" value="Eukaryota"/>
</dbReference>
<dbReference type="GeneTree" id="ENSGT00530000064485"/>
<dbReference type="HOGENOM" id="CLU_004102_0_0_1"/>
<dbReference type="InParanoid" id="F6QRE9"/>
<dbReference type="OMA" id="GMQEDGT"/>
<dbReference type="OrthoDB" id="120976at2759"/>
<dbReference type="TreeFam" id="TF331348"/>
<dbReference type="BioGRID-ORCS" id="209601">
    <property type="hits" value="0 hits in 77 CRISPR screens"/>
</dbReference>
<dbReference type="PRO" id="PR:F6QRE9"/>
<dbReference type="Proteomes" id="UP000000589">
    <property type="component" value="Chromosome 3"/>
</dbReference>
<dbReference type="RNAct" id="F6QRE9">
    <property type="molecule type" value="protein"/>
</dbReference>
<dbReference type="Bgee" id="ENSMUSG00000078161">
    <property type="expression patterns" value="Expressed in spermatid and 74 other cell types or tissues"/>
</dbReference>
<dbReference type="ExpressionAtlas" id="F6QRE9">
    <property type="expression patterns" value="baseline and differential"/>
</dbReference>
<dbReference type="GO" id="GO:0005929">
    <property type="term" value="C:cilium"/>
    <property type="evidence" value="ECO:0007669"/>
    <property type="project" value="UniProtKB-SubCell"/>
</dbReference>
<dbReference type="GO" id="GO:0005737">
    <property type="term" value="C:cytoplasm"/>
    <property type="evidence" value="ECO:0007669"/>
    <property type="project" value="UniProtKB-SubCell"/>
</dbReference>
<dbReference type="InterPro" id="IPR048257">
    <property type="entry name" value="DUF4590"/>
</dbReference>
<dbReference type="InterPro" id="IPR027962">
    <property type="entry name" value="ERICH3"/>
</dbReference>
<dbReference type="PANTHER" id="PTHR23034">
    <property type="entry name" value="GLUTAMATE-RICH PROTEIN 3"/>
    <property type="match status" value="1"/>
</dbReference>
<dbReference type="PANTHER" id="PTHR23034:SF2">
    <property type="entry name" value="GLUTAMATE-RICH PROTEIN 3"/>
    <property type="match status" value="1"/>
</dbReference>
<dbReference type="Pfam" id="PF15257">
    <property type="entry name" value="DUF4590"/>
    <property type="match status" value="1"/>
</dbReference>
<feature type="chain" id="PRO_0000458848" description="Glutamate rich 3">
    <location>
        <begin position="1"/>
        <end position="1637"/>
    </location>
</feature>
<feature type="region of interest" description="Disordered" evidence="2">
    <location>
        <begin position="145"/>
        <end position="192"/>
    </location>
</feature>
<feature type="region of interest" description="Disordered" evidence="2">
    <location>
        <begin position="408"/>
        <end position="453"/>
    </location>
</feature>
<feature type="region of interest" description="Disordered" evidence="2">
    <location>
        <begin position="478"/>
        <end position="814"/>
    </location>
</feature>
<feature type="region of interest" description="Disordered" evidence="2">
    <location>
        <begin position="1111"/>
        <end position="1194"/>
    </location>
</feature>
<feature type="region of interest" description="Disordered" evidence="2">
    <location>
        <begin position="1238"/>
        <end position="1445"/>
    </location>
</feature>
<feature type="region of interest" description="Disordered" evidence="2">
    <location>
        <begin position="1457"/>
        <end position="1637"/>
    </location>
</feature>
<feature type="compositionally biased region" description="Polar residues" evidence="2">
    <location>
        <begin position="169"/>
        <end position="185"/>
    </location>
</feature>
<feature type="compositionally biased region" description="Basic and acidic residues" evidence="2">
    <location>
        <begin position="416"/>
        <end position="426"/>
    </location>
</feature>
<feature type="compositionally biased region" description="Basic and acidic residues" evidence="2">
    <location>
        <begin position="443"/>
        <end position="452"/>
    </location>
</feature>
<feature type="compositionally biased region" description="Basic and acidic residues" evidence="2">
    <location>
        <begin position="478"/>
        <end position="487"/>
    </location>
</feature>
<feature type="compositionally biased region" description="Acidic residues" evidence="2">
    <location>
        <begin position="500"/>
        <end position="523"/>
    </location>
</feature>
<feature type="compositionally biased region" description="Basic and acidic residues" evidence="2">
    <location>
        <begin position="534"/>
        <end position="557"/>
    </location>
</feature>
<feature type="compositionally biased region" description="Acidic residues" evidence="2">
    <location>
        <begin position="558"/>
        <end position="572"/>
    </location>
</feature>
<feature type="compositionally biased region" description="Low complexity" evidence="2">
    <location>
        <begin position="579"/>
        <end position="590"/>
    </location>
</feature>
<feature type="compositionally biased region" description="Low complexity" evidence="2">
    <location>
        <begin position="608"/>
        <end position="617"/>
    </location>
</feature>
<feature type="compositionally biased region" description="Basic and acidic residues" evidence="2">
    <location>
        <begin position="619"/>
        <end position="638"/>
    </location>
</feature>
<feature type="compositionally biased region" description="Basic and acidic residues" evidence="2">
    <location>
        <begin position="677"/>
        <end position="693"/>
    </location>
</feature>
<feature type="compositionally biased region" description="Basic and acidic residues" evidence="2">
    <location>
        <begin position="769"/>
        <end position="802"/>
    </location>
</feature>
<feature type="compositionally biased region" description="Basic and acidic residues" evidence="2">
    <location>
        <begin position="1115"/>
        <end position="1130"/>
    </location>
</feature>
<feature type="compositionally biased region" description="Basic and acidic residues" evidence="2">
    <location>
        <begin position="1264"/>
        <end position="1307"/>
    </location>
</feature>
<feature type="compositionally biased region" description="Basic and acidic residues" evidence="2">
    <location>
        <begin position="1319"/>
        <end position="1329"/>
    </location>
</feature>
<feature type="compositionally biased region" description="Basic and acidic residues" evidence="2">
    <location>
        <begin position="1342"/>
        <end position="1357"/>
    </location>
</feature>
<feature type="compositionally biased region" description="Basic and acidic residues" evidence="2">
    <location>
        <begin position="1402"/>
        <end position="1412"/>
    </location>
</feature>
<feature type="compositionally biased region" description="Polar residues" evidence="2">
    <location>
        <begin position="1476"/>
        <end position="1487"/>
    </location>
</feature>
<feature type="compositionally biased region" description="Basic and acidic residues" evidence="2">
    <location>
        <begin position="1550"/>
        <end position="1568"/>
    </location>
</feature>
<feature type="compositionally biased region" description="Basic and acidic residues" evidence="2">
    <location>
        <begin position="1589"/>
        <end position="1599"/>
    </location>
</feature>
<feature type="compositionally biased region" description="Basic and acidic residues" evidence="2">
    <location>
        <begin position="1614"/>
        <end position="1637"/>
    </location>
</feature>
<feature type="splice variant" id="VSP_061973" description="In isoform 2.">
    <original>MSHSHPAGLLATYNSLTDKHLAGYFNNTRIRRHLLRSGLITRSGRILSEKEYKVNNMKQDHQKYIRECLARAIFHKVLDMERYHQLEIKRKLDTLARKERIQRLKGEHTRRFIEDNMPVLTPHPPAGPKTNRGHSVLAEEGRSSPLTLTAPRPYTAPGNMQPPVRLQPLLSSRQTRNGSKITSGSKPKGSLLESEALFPLGG</original>
    <variation>MFAKG</variation>
    <location>
        <begin position="1"/>
        <end position="202"/>
    </location>
</feature>
<feature type="splice variant" id="VSP_061974" description="In isoform 2.">
    <original>VGQIT</original>
    <variation>GKYSP</variation>
    <location>
        <begin position="710"/>
        <end position="714"/>
    </location>
</feature>
<feature type="splice variant" id="VSP_061975" description="In isoform 2.">
    <location>
        <begin position="715"/>
        <end position="1637"/>
    </location>
</feature>
<reference key="1">
    <citation type="journal article" date="2005" name="Science">
        <title>The transcriptional landscape of the mammalian genome.</title>
        <authorList>
            <person name="Carninci P."/>
            <person name="Kasukawa T."/>
            <person name="Katayama S."/>
            <person name="Gough J."/>
            <person name="Frith M.C."/>
            <person name="Maeda N."/>
            <person name="Oyama R."/>
            <person name="Ravasi T."/>
            <person name="Lenhard B."/>
            <person name="Wells C."/>
            <person name="Kodzius R."/>
            <person name="Shimokawa K."/>
            <person name="Bajic V.B."/>
            <person name="Brenner S.E."/>
            <person name="Batalov S."/>
            <person name="Forrest A.R."/>
            <person name="Zavolan M."/>
            <person name="Davis M.J."/>
            <person name="Wilming L.G."/>
            <person name="Aidinis V."/>
            <person name="Allen J.E."/>
            <person name="Ambesi-Impiombato A."/>
            <person name="Apweiler R."/>
            <person name="Aturaliya R.N."/>
            <person name="Bailey T.L."/>
            <person name="Bansal M."/>
            <person name="Baxter L."/>
            <person name="Beisel K.W."/>
            <person name="Bersano T."/>
            <person name="Bono H."/>
            <person name="Chalk A.M."/>
            <person name="Chiu K.P."/>
            <person name="Choudhary V."/>
            <person name="Christoffels A."/>
            <person name="Clutterbuck D.R."/>
            <person name="Crowe M.L."/>
            <person name="Dalla E."/>
            <person name="Dalrymple B.P."/>
            <person name="de Bono B."/>
            <person name="Della Gatta G."/>
            <person name="di Bernardo D."/>
            <person name="Down T."/>
            <person name="Engstrom P."/>
            <person name="Fagiolini M."/>
            <person name="Faulkner G."/>
            <person name="Fletcher C.F."/>
            <person name="Fukushima T."/>
            <person name="Furuno M."/>
            <person name="Futaki S."/>
            <person name="Gariboldi M."/>
            <person name="Georgii-Hemming P."/>
            <person name="Gingeras T.R."/>
            <person name="Gojobori T."/>
            <person name="Green R.E."/>
            <person name="Gustincich S."/>
            <person name="Harbers M."/>
            <person name="Hayashi Y."/>
            <person name="Hensch T.K."/>
            <person name="Hirokawa N."/>
            <person name="Hill D."/>
            <person name="Huminiecki L."/>
            <person name="Iacono M."/>
            <person name="Ikeo K."/>
            <person name="Iwama A."/>
            <person name="Ishikawa T."/>
            <person name="Jakt M."/>
            <person name="Kanapin A."/>
            <person name="Katoh M."/>
            <person name="Kawasawa Y."/>
            <person name="Kelso J."/>
            <person name="Kitamura H."/>
            <person name="Kitano H."/>
            <person name="Kollias G."/>
            <person name="Krishnan S.P."/>
            <person name="Kruger A."/>
            <person name="Kummerfeld S.K."/>
            <person name="Kurochkin I.V."/>
            <person name="Lareau L.F."/>
            <person name="Lazarevic D."/>
            <person name="Lipovich L."/>
            <person name="Liu J."/>
            <person name="Liuni S."/>
            <person name="McWilliam S."/>
            <person name="Madan Babu M."/>
            <person name="Madera M."/>
            <person name="Marchionni L."/>
            <person name="Matsuda H."/>
            <person name="Matsuzawa S."/>
            <person name="Miki H."/>
            <person name="Mignone F."/>
            <person name="Miyake S."/>
            <person name="Morris K."/>
            <person name="Mottagui-Tabar S."/>
            <person name="Mulder N."/>
            <person name="Nakano N."/>
            <person name="Nakauchi H."/>
            <person name="Ng P."/>
            <person name="Nilsson R."/>
            <person name="Nishiguchi S."/>
            <person name="Nishikawa S."/>
            <person name="Nori F."/>
            <person name="Ohara O."/>
            <person name="Okazaki Y."/>
            <person name="Orlando V."/>
            <person name="Pang K.C."/>
            <person name="Pavan W.J."/>
            <person name="Pavesi G."/>
            <person name="Pesole G."/>
            <person name="Petrovsky N."/>
            <person name="Piazza S."/>
            <person name="Reed J."/>
            <person name="Reid J.F."/>
            <person name="Ring B.Z."/>
            <person name="Ringwald M."/>
            <person name="Rost B."/>
            <person name="Ruan Y."/>
            <person name="Salzberg S.L."/>
            <person name="Sandelin A."/>
            <person name="Schneider C."/>
            <person name="Schoenbach C."/>
            <person name="Sekiguchi K."/>
            <person name="Semple C.A."/>
            <person name="Seno S."/>
            <person name="Sessa L."/>
            <person name="Sheng Y."/>
            <person name="Shibata Y."/>
            <person name="Shimada H."/>
            <person name="Shimada K."/>
            <person name="Silva D."/>
            <person name="Sinclair B."/>
            <person name="Sperling S."/>
            <person name="Stupka E."/>
            <person name="Sugiura K."/>
            <person name="Sultana R."/>
            <person name="Takenaka Y."/>
            <person name="Taki K."/>
            <person name="Tammoja K."/>
            <person name="Tan S.L."/>
            <person name="Tang S."/>
            <person name="Taylor M.S."/>
            <person name="Tegner J."/>
            <person name="Teichmann S.A."/>
            <person name="Ueda H.R."/>
            <person name="van Nimwegen E."/>
            <person name="Verardo R."/>
            <person name="Wei C.L."/>
            <person name="Yagi K."/>
            <person name="Yamanishi H."/>
            <person name="Zabarovsky E."/>
            <person name="Zhu S."/>
            <person name="Zimmer A."/>
            <person name="Hide W."/>
            <person name="Bult C."/>
            <person name="Grimmond S.M."/>
            <person name="Teasdale R.D."/>
            <person name="Liu E.T."/>
            <person name="Brusic V."/>
            <person name="Quackenbush J."/>
            <person name="Wahlestedt C."/>
            <person name="Mattick J.S."/>
            <person name="Hume D.A."/>
            <person name="Kai C."/>
            <person name="Sasaki D."/>
            <person name="Tomaru Y."/>
            <person name="Fukuda S."/>
            <person name="Kanamori-Katayama M."/>
            <person name="Suzuki M."/>
            <person name="Aoki J."/>
            <person name="Arakawa T."/>
            <person name="Iida J."/>
            <person name="Imamura K."/>
            <person name="Itoh M."/>
            <person name="Kato T."/>
            <person name="Kawaji H."/>
            <person name="Kawagashira N."/>
            <person name="Kawashima T."/>
            <person name="Kojima M."/>
            <person name="Kondo S."/>
            <person name="Konno H."/>
            <person name="Nakano K."/>
            <person name="Ninomiya N."/>
            <person name="Nishio T."/>
            <person name="Okada M."/>
            <person name="Plessy C."/>
            <person name="Shibata K."/>
            <person name="Shiraki T."/>
            <person name="Suzuki S."/>
            <person name="Tagami M."/>
            <person name="Waki K."/>
            <person name="Watahiki A."/>
            <person name="Okamura-Oho Y."/>
            <person name="Suzuki H."/>
            <person name="Kawai J."/>
            <person name="Hayashizaki Y."/>
        </authorList>
    </citation>
    <scope>NUCLEOTIDE SEQUENCE [LARGE SCALE MRNA] (ISOFORM 2)</scope>
    <source>
        <strain>C57BL/6J</strain>
        <tissue>Testis</tissue>
    </source>
</reference>
<reference key="2">
    <citation type="journal article" date="2009" name="PLoS Biol.">
        <title>Lineage-specific biology revealed by a finished genome assembly of the mouse.</title>
        <authorList>
            <person name="Church D.M."/>
            <person name="Goodstadt L."/>
            <person name="Hillier L.W."/>
            <person name="Zody M.C."/>
            <person name="Goldstein S."/>
            <person name="She X."/>
            <person name="Bult C.J."/>
            <person name="Agarwala R."/>
            <person name="Cherry J.L."/>
            <person name="DiCuccio M."/>
            <person name="Hlavina W."/>
            <person name="Kapustin Y."/>
            <person name="Meric P."/>
            <person name="Maglott D."/>
            <person name="Birtle Z."/>
            <person name="Marques A.C."/>
            <person name="Graves T."/>
            <person name="Zhou S."/>
            <person name="Teague B."/>
            <person name="Potamousis K."/>
            <person name="Churas C."/>
            <person name="Place M."/>
            <person name="Herschleb J."/>
            <person name="Runnheim R."/>
            <person name="Forrest D."/>
            <person name="Amos-Landgraf J."/>
            <person name="Schwartz D.C."/>
            <person name="Cheng Z."/>
            <person name="Lindblad-Toh K."/>
            <person name="Eichler E.E."/>
            <person name="Ponting C.P."/>
        </authorList>
    </citation>
    <scope>NUCLEOTIDE SEQUENCE [LARGE SCALE GENOMIC DNA]</scope>
    <source>
        <strain>C57BL/6J</strain>
    </source>
</reference>
<organism>
    <name type="scientific">Mus musculus</name>
    <name type="common">Mouse</name>
    <dbReference type="NCBI Taxonomy" id="10090"/>
    <lineage>
        <taxon>Eukaryota</taxon>
        <taxon>Metazoa</taxon>
        <taxon>Chordata</taxon>
        <taxon>Craniata</taxon>
        <taxon>Vertebrata</taxon>
        <taxon>Euteleostomi</taxon>
        <taxon>Mammalia</taxon>
        <taxon>Eutheria</taxon>
        <taxon>Euarchontoglires</taxon>
        <taxon>Glires</taxon>
        <taxon>Rodentia</taxon>
        <taxon>Myomorpha</taxon>
        <taxon>Muroidea</taxon>
        <taxon>Muridae</taxon>
        <taxon>Murinae</taxon>
        <taxon>Mus</taxon>
        <taxon>Mus</taxon>
    </lineage>
</organism>
<name>ERIC3_MOUSE</name>
<keyword id="KW-0025">Alternative splicing</keyword>
<keyword id="KW-0966">Cell projection</keyword>
<keyword id="KW-0963">Cytoplasm</keyword>
<keyword id="KW-1185">Reference proteome</keyword>
<gene>
    <name evidence="3" type="primary">Erich3</name>
</gene>
<evidence type="ECO:0000250" key="1">
    <source>
        <dbReference type="UniProtKB" id="Q5RHP9"/>
    </source>
</evidence>
<evidence type="ECO:0000256" key="2">
    <source>
        <dbReference type="SAM" id="MobiDB-lite"/>
    </source>
</evidence>
<evidence type="ECO:0000312" key="3">
    <source>
        <dbReference type="MGI" id="MGI:1919095"/>
    </source>
</evidence>
<accession>F6QRE9</accession>
<accession>Q8BVT3</accession>
<proteinExistence type="evidence at transcript level"/>
<comment type="function">
    <text evidence="1">Component of the primary cilium that controls cilium formation and length. May function within retrograde intraflagellar transport (IFT)-associated pathways to remove signaling proteins from primary cilia. Also involved in neuronal vesicle biogenesis and neurotransmitter vesicular function.</text>
</comment>
<comment type="subcellular location">
    <subcellularLocation>
        <location evidence="1">Cell projection</location>
        <location evidence="1">Cilium</location>
    </subcellularLocation>
    <subcellularLocation>
        <location evidence="1">Cytoplasm</location>
    </subcellularLocation>
</comment>
<comment type="alternative products">
    <event type="alternative splicing"/>
    <isoform>
        <id>F6QRE9-1</id>
        <name>1</name>
        <sequence type="displayed"/>
    </isoform>
    <isoform>
        <id>F6QRE9-2</id>
        <name>2</name>
        <sequence type="described" ref="VSP_061973 VSP_061974 VSP_061975"/>
    </isoform>
</comment>